<sequence>MSQVPAYKRILLKLSGEALMGDDSYGINRTTIEQIVGQIKEVVELGVEVGVVIGGGNIFRGVAPAAAGMDRATADYMGMMATVMNALALKDAMTKAGLIARVQSALTMQQIAEPYVRGKAMQYLEEGKVVIFAAGTGNPFFTTDTAAALRGMEMNVDIMLKATKVDGVYTDDPKKNPDAVRYQSVTFDEAISRNLKVMDATAFALCRDQHLNIKVFSIFKNGALRRVVLGEDEGTLVHC</sequence>
<dbReference type="EC" id="2.7.4.22" evidence="1"/>
<dbReference type="EMBL" id="AE016825">
    <property type="protein sequence ID" value="AAQ59871.1"/>
    <property type="molecule type" value="Genomic_DNA"/>
</dbReference>
<dbReference type="RefSeq" id="WP_011135746.1">
    <property type="nucleotide sequence ID" value="NC_005085.1"/>
</dbReference>
<dbReference type="SMR" id="Q7NVZ2"/>
<dbReference type="STRING" id="243365.CV_2198"/>
<dbReference type="GeneID" id="66367808"/>
<dbReference type="KEGG" id="cvi:CV_2198"/>
<dbReference type="eggNOG" id="COG0528">
    <property type="taxonomic scope" value="Bacteria"/>
</dbReference>
<dbReference type="HOGENOM" id="CLU_033861_0_0_4"/>
<dbReference type="OrthoDB" id="9807458at2"/>
<dbReference type="UniPathway" id="UPA00159">
    <property type="reaction ID" value="UER00275"/>
</dbReference>
<dbReference type="Proteomes" id="UP000001424">
    <property type="component" value="Chromosome"/>
</dbReference>
<dbReference type="GO" id="GO:0005829">
    <property type="term" value="C:cytosol"/>
    <property type="evidence" value="ECO:0007669"/>
    <property type="project" value="TreeGrafter"/>
</dbReference>
<dbReference type="GO" id="GO:0005524">
    <property type="term" value="F:ATP binding"/>
    <property type="evidence" value="ECO:0007669"/>
    <property type="project" value="UniProtKB-KW"/>
</dbReference>
<dbReference type="GO" id="GO:0033862">
    <property type="term" value="F:UMP kinase activity"/>
    <property type="evidence" value="ECO:0007669"/>
    <property type="project" value="UniProtKB-EC"/>
</dbReference>
<dbReference type="GO" id="GO:0044210">
    <property type="term" value="P:'de novo' CTP biosynthetic process"/>
    <property type="evidence" value="ECO:0007669"/>
    <property type="project" value="UniProtKB-UniRule"/>
</dbReference>
<dbReference type="GO" id="GO:0006225">
    <property type="term" value="P:UDP biosynthetic process"/>
    <property type="evidence" value="ECO:0007669"/>
    <property type="project" value="TreeGrafter"/>
</dbReference>
<dbReference type="CDD" id="cd04254">
    <property type="entry name" value="AAK_UMPK-PyrH-Ec"/>
    <property type="match status" value="1"/>
</dbReference>
<dbReference type="FunFam" id="3.40.1160.10:FF:000001">
    <property type="entry name" value="Uridylate kinase"/>
    <property type="match status" value="1"/>
</dbReference>
<dbReference type="Gene3D" id="3.40.1160.10">
    <property type="entry name" value="Acetylglutamate kinase-like"/>
    <property type="match status" value="1"/>
</dbReference>
<dbReference type="HAMAP" id="MF_01220_B">
    <property type="entry name" value="PyrH_B"/>
    <property type="match status" value="1"/>
</dbReference>
<dbReference type="InterPro" id="IPR036393">
    <property type="entry name" value="AceGlu_kinase-like_sf"/>
</dbReference>
<dbReference type="InterPro" id="IPR001048">
    <property type="entry name" value="Asp/Glu/Uridylate_kinase"/>
</dbReference>
<dbReference type="InterPro" id="IPR011817">
    <property type="entry name" value="Uridylate_kinase"/>
</dbReference>
<dbReference type="InterPro" id="IPR015963">
    <property type="entry name" value="Uridylate_kinase_bac"/>
</dbReference>
<dbReference type="NCBIfam" id="TIGR02075">
    <property type="entry name" value="pyrH_bact"/>
    <property type="match status" value="1"/>
</dbReference>
<dbReference type="PANTHER" id="PTHR42833">
    <property type="entry name" value="URIDYLATE KINASE"/>
    <property type="match status" value="1"/>
</dbReference>
<dbReference type="PANTHER" id="PTHR42833:SF4">
    <property type="entry name" value="URIDYLATE KINASE PUMPKIN, CHLOROPLASTIC"/>
    <property type="match status" value="1"/>
</dbReference>
<dbReference type="Pfam" id="PF00696">
    <property type="entry name" value="AA_kinase"/>
    <property type="match status" value="1"/>
</dbReference>
<dbReference type="PIRSF" id="PIRSF005650">
    <property type="entry name" value="Uridylate_kin"/>
    <property type="match status" value="1"/>
</dbReference>
<dbReference type="SUPFAM" id="SSF53633">
    <property type="entry name" value="Carbamate kinase-like"/>
    <property type="match status" value="1"/>
</dbReference>
<evidence type="ECO:0000255" key="1">
    <source>
        <dbReference type="HAMAP-Rule" id="MF_01220"/>
    </source>
</evidence>
<accession>Q7NVZ2</accession>
<proteinExistence type="inferred from homology"/>
<feature type="chain" id="PRO_1000053907" description="Uridylate kinase">
    <location>
        <begin position="1"/>
        <end position="239"/>
    </location>
</feature>
<feature type="binding site" evidence="1">
    <location>
        <begin position="13"/>
        <end position="16"/>
    </location>
    <ligand>
        <name>ATP</name>
        <dbReference type="ChEBI" id="CHEBI:30616"/>
    </ligand>
</feature>
<feature type="binding site" evidence="1">
    <location>
        <position position="55"/>
    </location>
    <ligand>
        <name>UMP</name>
        <dbReference type="ChEBI" id="CHEBI:57865"/>
    </ligand>
</feature>
<feature type="binding site" evidence="1">
    <location>
        <position position="56"/>
    </location>
    <ligand>
        <name>ATP</name>
        <dbReference type="ChEBI" id="CHEBI:30616"/>
    </ligand>
</feature>
<feature type="binding site" evidence="1">
    <location>
        <position position="60"/>
    </location>
    <ligand>
        <name>ATP</name>
        <dbReference type="ChEBI" id="CHEBI:30616"/>
    </ligand>
</feature>
<feature type="binding site" evidence="1">
    <location>
        <position position="75"/>
    </location>
    <ligand>
        <name>UMP</name>
        <dbReference type="ChEBI" id="CHEBI:57865"/>
    </ligand>
</feature>
<feature type="binding site" evidence="1">
    <location>
        <begin position="136"/>
        <end position="143"/>
    </location>
    <ligand>
        <name>UMP</name>
        <dbReference type="ChEBI" id="CHEBI:57865"/>
    </ligand>
</feature>
<feature type="binding site" evidence="1">
    <location>
        <position position="163"/>
    </location>
    <ligand>
        <name>ATP</name>
        <dbReference type="ChEBI" id="CHEBI:30616"/>
    </ligand>
</feature>
<feature type="binding site" evidence="1">
    <location>
        <position position="169"/>
    </location>
    <ligand>
        <name>ATP</name>
        <dbReference type="ChEBI" id="CHEBI:30616"/>
    </ligand>
</feature>
<feature type="binding site" evidence="1">
    <location>
        <position position="172"/>
    </location>
    <ligand>
        <name>ATP</name>
        <dbReference type="ChEBI" id="CHEBI:30616"/>
    </ligand>
</feature>
<reference key="1">
    <citation type="journal article" date="2003" name="Proc. Natl. Acad. Sci. U.S.A.">
        <title>The complete genome sequence of Chromobacterium violaceum reveals remarkable and exploitable bacterial adaptability.</title>
        <authorList>
            <person name="Vasconcelos A.T.R."/>
            <person name="de Almeida D.F."/>
            <person name="Hungria M."/>
            <person name="Guimaraes C.T."/>
            <person name="Antonio R.V."/>
            <person name="Almeida F.C."/>
            <person name="de Almeida L.G.P."/>
            <person name="de Almeida R."/>
            <person name="Alves-Gomes J.A."/>
            <person name="Andrade E.M."/>
            <person name="Araripe J."/>
            <person name="de Araujo M.F.F."/>
            <person name="Astolfi-Filho S."/>
            <person name="Azevedo V."/>
            <person name="Baptista A.J."/>
            <person name="Bataus L.A.M."/>
            <person name="Batista J.S."/>
            <person name="Belo A."/>
            <person name="van den Berg C."/>
            <person name="Bogo M."/>
            <person name="Bonatto S."/>
            <person name="Bordignon J."/>
            <person name="Brigido M.M."/>
            <person name="Brito C.A."/>
            <person name="Brocchi M."/>
            <person name="Burity H.A."/>
            <person name="Camargo A.A."/>
            <person name="Cardoso D.D.P."/>
            <person name="Carneiro N.P."/>
            <person name="Carraro D.M."/>
            <person name="Carvalho C.M.B."/>
            <person name="Cascardo J.C.M."/>
            <person name="Cavada B.S."/>
            <person name="Chueire L.M.O."/>
            <person name="Creczynski-Pasa T.B."/>
            <person name="Cunha-Junior N.C."/>
            <person name="Fagundes N."/>
            <person name="Falcao C.L."/>
            <person name="Fantinatti F."/>
            <person name="Farias I.P."/>
            <person name="Felipe M.S.S."/>
            <person name="Ferrari L.P."/>
            <person name="Ferro J.A."/>
            <person name="Ferro M.I.T."/>
            <person name="Franco G.R."/>
            <person name="Freitas N.S.A."/>
            <person name="Furlan L.R."/>
            <person name="Gazzinelli R.T."/>
            <person name="Gomes E.A."/>
            <person name="Goncalves P.R."/>
            <person name="Grangeiro T.B."/>
            <person name="Grattapaglia D."/>
            <person name="Grisard E.C."/>
            <person name="Hanna E.S."/>
            <person name="Jardim S.N."/>
            <person name="Laurino J."/>
            <person name="Leoi L.C.T."/>
            <person name="Lima L.F.A."/>
            <person name="Loureiro M.F."/>
            <person name="Lyra M.C.C.P."/>
            <person name="Madeira H.M.F."/>
            <person name="Manfio G.P."/>
            <person name="Maranhao A.Q."/>
            <person name="Martins W.S."/>
            <person name="di Mauro S.M.Z."/>
            <person name="de Medeiros S.R.B."/>
            <person name="Meissner R.V."/>
            <person name="Moreira M.A.M."/>
            <person name="Nascimento F.F."/>
            <person name="Nicolas M.F."/>
            <person name="Oliveira J.G."/>
            <person name="Oliveira S.C."/>
            <person name="Paixao R.F.C."/>
            <person name="Parente J.A."/>
            <person name="Pedrosa F.O."/>
            <person name="Pena S.D.J."/>
            <person name="Pereira J.O."/>
            <person name="Pereira M."/>
            <person name="Pinto L.S.R.C."/>
            <person name="Pinto L.S."/>
            <person name="Porto J.I.R."/>
            <person name="Potrich D.P."/>
            <person name="Ramalho-Neto C.E."/>
            <person name="Reis A.M.M."/>
            <person name="Rigo L.U."/>
            <person name="Rondinelli E."/>
            <person name="Santos E.B.P."/>
            <person name="Santos F.R."/>
            <person name="Schneider M.P.C."/>
            <person name="Seuanez H.N."/>
            <person name="Silva A.M.R."/>
            <person name="da Silva A.L.C."/>
            <person name="Silva D.W."/>
            <person name="Silva R."/>
            <person name="Simoes I.C."/>
            <person name="Simon D."/>
            <person name="Soares C.M.A."/>
            <person name="Soares R.B.A."/>
            <person name="Souza E.M."/>
            <person name="Souza K.R.L."/>
            <person name="Souza R.C."/>
            <person name="Steffens M.B.R."/>
            <person name="Steindel M."/>
            <person name="Teixeira S.R."/>
            <person name="Urmenyi T."/>
            <person name="Vettore A."/>
            <person name="Wassem R."/>
            <person name="Zaha A."/>
            <person name="Simpson A.J.G."/>
        </authorList>
    </citation>
    <scope>NUCLEOTIDE SEQUENCE [LARGE SCALE GENOMIC DNA]</scope>
    <source>
        <strain>ATCC 12472 / DSM 30191 / JCM 1249 / CCUG 213 / NBRC 12614 / NCIMB 9131 / NCTC 9757 / MK</strain>
    </source>
</reference>
<name>PYRH_CHRVO</name>
<protein>
    <recommendedName>
        <fullName evidence="1">Uridylate kinase</fullName>
        <shortName evidence="1">UK</shortName>
        <ecNumber evidence="1">2.7.4.22</ecNumber>
    </recommendedName>
    <alternativeName>
        <fullName evidence="1">Uridine monophosphate kinase</fullName>
        <shortName evidence="1">UMP kinase</shortName>
        <shortName evidence="1">UMPK</shortName>
    </alternativeName>
</protein>
<gene>
    <name evidence="1" type="primary">pyrH</name>
    <name type="ordered locus">CV_2198</name>
</gene>
<keyword id="KW-0067">ATP-binding</keyword>
<keyword id="KW-0963">Cytoplasm</keyword>
<keyword id="KW-0418">Kinase</keyword>
<keyword id="KW-0547">Nucleotide-binding</keyword>
<keyword id="KW-0665">Pyrimidine biosynthesis</keyword>
<keyword id="KW-1185">Reference proteome</keyword>
<keyword id="KW-0808">Transferase</keyword>
<organism>
    <name type="scientific">Chromobacterium violaceum (strain ATCC 12472 / DSM 30191 / JCM 1249 / CCUG 213 / NBRC 12614 / NCIMB 9131 / NCTC 9757 / MK)</name>
    <dbReference type="NCBI Taxonomy" id="243365"/>
    <lineage>
        <taxon>Bacteria</taxon>
        <taxon>Pseudomonadati</taxon>
        <taxon>Pseudomonadota</taxon>
        <taxon>Betaproteobacteria</taxon>
        <taxon>Neisseriales</taxon>
        <taxon>Chromobacteriaceae</taxon>
        <taxon>Chromobacterium</taxon>
    </lineage>
</organism>
<comment type="function">
    <text evidence="1">Catalyzes the reversible phosphorylation of UMP to UDP.</text>
</comment>
<comment type="catalytic activity">
    <reaction evidence="1">
        <text>UMP + ATP = UDP + ADP</text>
        <dbReference type="Rhea" id="RHEA:24400"/>
        <dbReference type="ChEBI" id="CHEBI:30616"/>
        <dbReference type="ChEBI" id="CHEBI:57865"/>
        <dbReference type="ChEBI" id="CHEBI:58223"/>
        <dbReference type="ChEBI" id="CHEBI:456216"/>
        <dbReference type="EC" id="2.7.4.22"/>
    </reaction>
</comment>
<comment type="activity regulation">
    <text evidence="1">Inhibited by UTP.</text>
</comment>
<comment type="pathway">
    <text evidence="1">Pyrimidine metabolism; CTP biosynthesis via de novo pathway; UDP from UMP (UMPK route): step 1/1.</text>
</comment>
<comment type="subunit">
    <text evidence="1">Homohexamer.</text>
</comment>
<comment type="subcellular location">
    <subcellularLocation>
        <location evidence="1">Cytoplasm</location>
    </subcellularLocation>
</comment>
<comment type="similarity">
    <text evidence="1">Belongs to the UMP kinase family.</text>
</comment>